<name>FOS_TAKRU</name>
<proteinExistence type="inferred from homology"/>
<organism>
    <name type="scientific">Takifugu rubripes</name>
    <name type="common">Japanese pufferfish</name>
    <name type="synonym">Fugu rubripes</name>
    <dbReference type="NCBI Taxonomy" id="31033"/>
    <lineage>
        <taxon>Eukaryota</taxon>
        <taxon>Metazoa</taxon>
        <taxon>Chordata</taxon>
        <taxon>Craniata</taxon>
        <taxon>Vertebrata</taxon>
        <taxon>Euteleostomi</taxon>
        <taxon>Actinopterygii</taxon>
        <taxon>Neopterygii</taxon>
        <taxon>Teleostei</taxon>
        <taxon>Neoteleostei</taxon>
        <taxon>Acanthomorphata</taxon>
        <taxon>Eupercaria</taxon>
        <taxon>Tetraodontiformes</taxon>
        <taxon>Tetradontoidea</taxon>
        <taxon>Tetraodontidae</taxon>
        <taxon>Takifugu</taxon>
    </lineage>
</organism>
<feature type="chain" id="PRO_0000076473" description="Protein c-Fos">
    <location>
        <begin position="1"/>
        <end position="376"/>
    </location>
</feature>
<feature type="domain" description="bZIP" evidence="2">
    <location>
        <begin position="121"/>
        <end position="184"/>
    </location>
</feature>
<feature type="region of interest" description="Disordered" evidence="3">
    <location>
        <begin position="81"/>
        <end position="161"/>
    </location>
</feature>
<feature type="region of interest" description="Basic motif" evidence="2">
    <location>
        <begin position="123"/>
        <end position="143"/>
    </location>
</feature>
<feature type="region of interest" description="Leucine-zipper" evidence="2">
    <location>
        <begin position="149"/>
        <end position="177"/>
    </location>
</feature>
<feature type="region of interest" description="Disordered" evidence="3">
    <location>
        <begin position="354"/>
        <end position="376"/>
    </location>
</feature>
<feature type="compositionally biased region" description="Low complexity" evidence="3">
    <location>
        <begin position="360"/>
        <end position="370"/>
    </location>
</feature>
<accession>P53450</accession>
<reference key="1">
    <citation type="journal article" date="1996" name="Proc. Natl. Acad. Sci. U.S.A.">
        <title>Conservation of synteny between the genome of the pufferfish (Fugu rubripes) and the region on human chromosome 14 (14q24.3) associated with familial Alzheimer disease (AD3 locus).</title>
        <authorList>
            <person name="Trower M.K."/>
            <person name="Orton S.M."/>
            <person name="Purvis I.J."/>
            <person name="Sanseau P."/>
            <person name="Riley J."/>
            <person name="Christodoulou C."/>
            <person name="Burt D."/>
            <person name="See C.G."/>
            <person name="Elgar G."/>
            <person name="Sherrington R."/>
            <person name="Rogaev E.I."/>
            <person name="St George-Hyslop P.H."/>
            <person name="Brenner S."/>
            <person name="Dykes C.W."/>
        </authorList>
    </citation>
    <scope>NUCLEOTIDE SEQUENCE [GENOMIC DNA]</scope>
</reference>
<keyword id="KW-0238">DNA-binding</keyword>
<keyword id="KW-0539">Nucleus</keyword>
<keyword id="KW-0597">Phosphoprotein</keyword>
<keyword id="KW-0656">Proto-oncogene</keyword>
<keyword id="KW-1185">Reference proteome</keyword>
<sequence length="376" mass="40826">MMFTSFNAECDSSSRCSASPVGDNLYYPSPAGSYSSMGSPQSQDFTDLTASSASFIPTVTAISTSPDLQWMVQPLISSVAPSHRAHPYSPSPSYKRTVMRSAASKAHGKRSRVEQTTPEEEEKKRIRRERNKQAAAKCRNRRRELTDTLQAETDQLEDEKSSLQNDIANLLKEKERLEFILAAHQPICKIPSQMDTDFSVVSMSPVHACLSTTVSTQLQTSIPEATTVTSSHSTFTSTSNSIFSGSSDSLLSTATVSNSVVKMTDLDSSVLEESLDLLAKTEAETARSVPDVNLSNSLFAAQDWEPLHATISSSDFEPLCTPVVTCTPACTTLTSSFVFTFPEAETFPTCGVAHRRRSNSNDQSSDSLSSPTLLAL</sequence>
<gene>
    <name type="primary">fos</name>
</gene>
<comment type="function">
    <text evidence="1">Nuclear phosphoprotein which forms a tight but non-covalently linked complex with the JUN/AP-1 transcription factor. FOS has a critical function in regulating the development of cells destined to form and maintain the skeleton. It is thought to have an important role in signal transduction, cell proliferation and differentiation (By similarity).</text>
</comment>
<comment type="subunit">
    <text evidence="1">Heterodimer.</text>
</comment>
<comment type="subcellular location">
    <subcellularLocation>
        <location>Nucleus</location>
    </subcellularLocation>
</comment>
<comment type="similarity">
    <text evidence="4">Belongs to the bZIP family. Fos subfamily.</text>
</comment>
<evidence type="ECO:0000250" key="1"/>
<evidence type="ECO:0000255" key="2">
    <source>
        <dbReference type="PROSITE-ProRule" id="PRU00978"/>
    </source>
</evidence>
<evidence type="ECO:0000256" key="3">
    <source>
        <dbReference type="SAM" id="MobiDB-lite"/>
    </source>
</evidence>
<evidence type="ECO:0000305" key="4"/>
<dbReference type="EMBL" id="U40757">
    <property type="protein sequence ID" value="AAC59778.1"/>
    <property type="molecule type" value="Genomic_DNA"/>
</dbReference>
<dbReference type="RefSeq" id="XP_003971716.1">
    <property type="nucleotide sequence ID" value="XM_003971667.2"/>
</dbReference>
<dbReference type="SMR" id="P53450"/>
<dbReference type="FunCoup" id="P53450">
    <property type="interactions" value="487"/>
</dbReference>
<dbReference type="STRING" id="31033.ENSTRUP00000026704"/>
<dbReference type="Ensembl" id="ENSTRUT00000092218.1">
    <property type="protein sequence ID" value="ENSTRUP00000074379.1"/>
    <property type="gene ID" value="ENSTRUG00000010579.3"/>
</dbReference>
<dbReference type="eggNOG" id="KOG1414">
    <property type="taxonomic scope" value="Eukaryota"/>
</dbReference>
<dbReference type="GeneTree" id="ENSGT00940000159276"/>
<dbReference type="InParanoid" id="P53450"/>
<dbReference type="Proteomes" id="UP000005226">
    <property type="component" value="Chromosome 16"/>
</dbReference>
<dbReference type="GO" id="GO:0005634">
    <property type="term" value="C:nucleus"/>
    <property type="evidence" value="ECO:0007669"/>
    <property type="project" value="UniProtKB-SubCell"/>
</dbReference>
<dbReference type="GO" id="GO:0000981">
    <property type="term" value="F:DNA-binding transcription factor activity, RNA polymerase II-specific"/>
    <property type="evidence" value="ECO:0007669"/>
    <property type="project" value="TreeGrafter"/>
</dbReference>
<dbReference type="GO" id="GO:0000978">
    <property type="term" value="F:RNA polymerase II cis-regulatory region sequence-specific DNA binding"/>
    <property type="evidence" value="ECO:0007669"/>
    <property type="project" value="TreeGrafter"/>
</dbReference>
<dbReference type="CDD" id="cd14721">
    <property type="entry name" value="bZIP_Fos"/>
    <property type="match status" value="1"/>
</dbReference>
<dbReference type="FunFam" id="1.20.5.170:FF:000006">
    <property type="entry name" value="fos-related antigen 2 isoform X1"/>
    <property type="match status" value="1"/>
</dbReference>
<dbReference type="Gene3D" id="1.20.5.170">
    <property type="match status" value="1"/>
</dbReference>
<dbReference type="InterPro" id="IPR000837">
    <property type="entry name" value="AP-1"/>
</dbReference>
<dbReference type="InterPro" id="IPR004827">
    <property type="entry name" value="bZIP"/>
</dbReference>
<dbReference type="InterPro" id="IPR046347">
    <property type="entry name" value="bZIP_sf"/>
</dbReference>
<dbReference type="PANTHER" id="PTHR23351">
    <property type="entry name" value="FOS TRANSCRIPTION FACTOR-RELATED"/>
    <property type="match status" value="1"/>
</dbReference>
<dbReference type="PANTHER" id="PTHR23351:SF4">
    <property type="entry name" value="PROTEIN C-FOS"/>
    <property type="match status" value="1"/>
</dbReference>
<dbReference type="Pfam" id="PF00170">
    <property type="entry name" value="bZIP_1"/>
    <property type="match status" value="1"/>
</dbReference>
<dbReference type="PRINTS" id="PR00042">
    <property type="entry name" value="LEUZIPPRFOS"/>
</dbReference>
<dbReference type="SMART" id="SM00338">
    <property type="entry name" value="BRLZ"/>
    <property type="match status" value="1"/>
</dbReference>
<dbReference type="SUPFAM" id="SSF57959">
    <property type="entry name" value="Leucine zipper domain"/>
    <property type="match status" value="1"/>
</dbReference>
<dbReference type="PROSITE" id="PS50217">
    <property type="entry name" value="BZIP"/>
    <property type="match status" value="1"/>
</dbReference>
<dbReference type="PROSITE" id="PS00036">
    <property type="entry name" value="BZIP_BASIC"/>
    <property type="match status" value="1"/>
</dbReference>
<protein>
    <recommendedName>
        <fullName evidence="4">Protein c-Fos</fullName>
    </recommendedName>
    <alternativeName>
        <fullName>Cellular oncogene fos</fullName>
    </alternativeName>
    <alternativeName>
        <fullName evidence="4">Transcription factor AP-1 subunit c-Fos</fullName>
    </alternativeName>
</protein>